<evidence type="ECO:0000255" key="1">
    <source>
        <dbReference type="HAMAP-Rule" id="MF_01520"/>
    </source>
</evidence>
<protein>
    <recommendedName>
        <fullName evidence="1">Bifunctional enzyme IspD/IspF</fullName>
    </recommendedName>
    <domain>
        <recommendedName>
            <fullName evidence="1">2-C-methyl-D-erythritol 4-phosphate cytidylyltransferase</fullName>
            <ecNumber evidence="1">2.7.7.60</ecNumber>
        </recommendedName>
        <alternativeName>
            <fullName evidence="1">4-diphosphocytidyl-2C-methyl-D-erythritol synthase</fullName>
        </alternativeName>
        <alternativeName>
            <fullName evidence="1">MEP cytidylyltransferase</fullName>
            <shortName evidence="1">MCT</shortName>
        </alternativeName>
    </domain>
    <domain>
        <recommendedName>
            <fullName evidence="1">2-C-methyl-D-erythritol 2,4-cyclodiphosphate synthase</fullName>
            <shortName evidence="1">MECDP-synthase</shortName>
            <shortName evidence="1">MECPP-synthase</shortName>
            <shortName evidence="1">MECPS</shortName>
            <ecNumber evidence="1">4.6.1.12</ecNumber>
        </recommendedName>
    </domain>
</protein>
<sequence length="398" mass="42115">MPSSKRTAAIIVAAGRGLRAGAGGPKQYRTIGGRTVISRAMEAFCQHPDVFAVQPVLNPDDLSMFNQAAAQFRYRPPANGGATRQASVRAGLEALAADAPDIVLIHDAARPFVTPALITRAIDAADKAGAAVPAIAVTDTIKQVDESGAVNATPDRAKLRIAQTPQAFHFDMILDAHRRAAREGRDDFTDDAALAEWVGLTVATFEGDAANMKLTTPEDFVREEARLAAALGDIRTGTGYDVHAFGEGDHLMLCGVKVPHNCGFLAHSDGDVGLHALVDAILGALADGDIGSHFPPSDPQWKGAASDKFLKYAVDRVTARGGRVANLEVTMICQQPKIGPLRDQMRARIADITGVAISRIAVKATTSERLGFTGREEGIAATASATIRLPWNDKGRDT</sequence>
<reference key="1">
    <citation type="journal article" date="2006" name="Appl. Environ. Microbiol.">
        <title>Genome sequence of the chemolithoautotrophic nitrite-oxidizing bacterium Nitrobacter winogradskyi Nb-255.</title>
        <authorList>
            <person name="Starkenburg S.R."/>
            <person name="Chain P.S.G."/>
            <person name="Sayavedra-Soto L.A."/>
            <person name="Hauser L."/>
            <person name="Land M.L."/>
            <person name="Larimer F.W."/>
            <person name="Malfatti S.A."/>
            <person name="Klotz M.G."/>
            <person name="Bottomley P.J."/>
            <person name="Arp D.J."/>
            <person name="Hickey W.J."/>
        </authorList>
    </citation>
    <scope>NUCLEOTIDE SEQUENCE [LARGE SCALE GENOMIC DNA]</scope>
    <source>
        <strain>ATCC 25391 / DSM 10237 / CIP 104748 / NCIMB 11846 / Nb-255</strain>
    </source>
</reference>
<feature type="chain" id="PRO_0000296750" description="Bifunctional enzyme IspD/IspF">
    <location>
        <begin position="1"/>
        <end position="398"/>
    </location>
</feature>
<feature type="region of interest" description="2-C-methyl-D-erythritol 4-phosphate cytidylyltransferase" evidence="1">
    <location>
        <begin position="1"/>
        <end position="234"/>
    </location>
</feature>
<feature type="region of interest" description="2-C-methyl-D-erythritol 2,4-cyclodiphosphate synthase" evidence="1">
    <location>
        <begin position="235"/>
        <end position="398"/>
    </location>
</feature>
<feature type="binding site" evidence="1">
    <location>
        <begin position="241"/>
        <end position="243"/>
    </location>
    <ligand>
        <name>4-CDP-2-C-methyl-D-erythritol 2-phosphate</name>
        <dbReference type="ChEBI" id="CHEBI:57919"/>
    </ligand>
</feature>
<feature type="binding site" evidence="1">
    <location>
        <position position="241"/>
    </location>
    <ligand>
        <name>a divalent metal cation</name>
        <dbReference type="ChEBI" id="CHEBI:60240"/>
    </ligand>
</feature>
<feature type="binding site" evidence="1">
    <location>
        <position position="243"/>
    </location>
    <ligand>
        <name>a divalent metal cation</name>
        <dbReference type="ChEBI" id="CHEBI:60240"/>
    </ligand>
</feature>
<feature type="binding site" evidence="1">
    <location>
        <begin position="267"/>
        <end position="268"/>
    </location>
    <ligand>
        <name>4-CDP-2-C-methyl-D-erythritol 2-phosphate</name>
        <dbReference type="ChEBI" id="CHEBI:57919"/>
    </ligand>
</feature>
<feature type="binding site" evidence="1">
    <location>
        <position position="275"/>
    </location>
    <ligand>
        <name>a divalent metal cation</name>
        <dbReference type="ChEBI" id="CHEBI:60240"/>
    </ligand>
</feature>
<feature type="binding site" evidence="1">
    <location>
        <begin position="289"/>
        <end position="291"/>
    </location>
    <ligand>
        <name>4-CDP-2-C-methyl-D-erythritol 2-phosphate</name>
        <dbReference type="ChEBI" id="CHEBI:57919"/>
    </ligand>
</feature>
<feature type="binding site" evidence="1">
    <location>
        <begin position="365"/>
        <end position="368"/>
    </location>
    <ligand>
        <name>4-CDP-2-C-methyl-D-erythritol 2-phosphate</name>
        <dbReference type="ChEBI" id="CHEBI:57919"/>
    </ligand>
</feature>
<feature type="binding site" evidence="1">
    <location>
        <position position="372"/>
    </location>
    <ligand>
        <name>4-CDP-2-C-methyl-D-erythritol 2-phosphate</name>
        <dbReference type="ChEBI" id="CHEBI:57919"/>
    </ligand>
</feature>
<feature type="binding site" evidence="1">
    <location>
        <position position="375"/>
    </location>
    <ligand>
        <name>4-CDP-2-C-methyl-D-erythritol 2-phosphate</name>
        <dbReference type="ChEBI" id="CHEBI:57919"/>
    </ligand>
</feature>
<feature type="site" description="Transition state stabilizer" evidence="1">
    <location>
        <position position="19"/>
    </location>
</feature>
<feature type="site" description="Transition state stabilizer" evidence="1">
    <location>
        <position position="26"/>
    </location>
</feature>
<feature type="site" description="Positions MEP for the nucleophilic attack" evidence="1">
    <location>
        <position position="156"/>
    </location>
</feature>
<feature type="site" description="Positions MEP for the nucleophilic attack" evidence="1">
    <location>
        <position position="213"/>
    </location>
</feature>
<feature type="site" description="Transition state stabilizer" evidence="1">
    <location>
        <position position="267"/>
    </location>
</feature>
<feature type="site" description="Transition state stabilizer" evidence="1">
    <location>
        <position position="366"/>
    </location>
</feature>
<proteinExistence type="inferred from homology"/>
<name>ISPDF_NITWN</name>
<dbReference type="EC" id="2.7.7.60" evidence="1"/>
<dbReference type="EC" id="4.6.1.12" evidence="1"/>
<dbReference type="EMBL" id="CP000115">
    <property type="protein sequence ID" value="ABA04703.1"/>
    <property type="molecule type" value="Genomic_DNA"/>
</dbReference>
<dbReference type="RefSeq" id="WP_011314711.1">
    <property type="nucleotide sequence ID" value="NC_007406.1"/>
</dbReference>
<dbReference type="SMR" id="Q3SSN8"/>
<dbReference type="STRING" id="323098.Nwi_1442"/>
<dbReference type="KEGG" id="nwi:Nwi_1442"/>
<dbReference type="eggNOG" id="COG0245">
    <property type="taxonomic scope" value="Bacteria"/>
</dbReference>
<dbReference type="eggNOG" id="COG1211">
    <property type="taxonomic scope" value="Bacteria"/>
</dbReference>
<dbReference type="HOGENOM" id="CLU_042800_2_5_5"/>
<dbReference type="OrthoDB" id="9804336at2"/>
<dbReference type="UniPathway" id="UPA00056">
    <property type="reaction ID" value="UER00093"/>
</dbReference>
<dbReference type="UniPathway" id="UPA00056">
    <property type="reaction ID" value="UER00095"/>
</dbReference>
<dbReference type="Proteomes" id="UP000002531">
    <property type="component" value="Chromosome"/>
</dbReference>
<dbReference type="GO" id="GO:0008685">
    <property type="term" value="F:2-C-methyl-D-erythritol 2,4-cyclodiphosphate synthase activity"/>
    <property type="evidence" value="ECO:0007669"/>
    <property type="project" value="UniProtKB-UniRule"/>
</dbReference>
<dbReference type="GO" id="GO:0050518">
    <property type="term" value="F:2-C-methyl-D-erythritol 4-phosphate cytidylyltransferase activity"/>
    <property type="evidence" value="ECO:0007669"/>
    <property type="project" value="UniProtKB-UniRule"/>
</dbReference>
<dbReference type="GO" id="GO:0046872">
    <property type="term" value="F:metal ion binding"/>
    <property type="evidence" value="ECO:0007669"/>
    <property type="project" value="UniProtKB-KW"/>
</dbReference>
<dbReference type="GO" id="GO:0019288">
    <property type="term" value="P:isopentenyl diphosphate biosynthetic process, methylerythritol 4-phosphate pathway"/>
    <property type="evidence" value="ECO:0007669"/>
    <property type="project" value="UniProtKB-UniRule"/>
</dbReference>
<dbReference type="GO" id="GO:0016114">
    <property type="term" value="P:terpenoid biosynthetic process"/>
    <property type="evidence" value="ECO:0007669"/>
    <property type="project" value="InterPro"/>
</dbReference>
<dbReference type="CDD" id="cd02516">
    <property type="entry name" value="CDP-ME_synthetase"/>
    <property type="match status" value="1"/>
</dbReference>
<dbReference type="CDD" id="cd00554">
    <property type="entry name" value="MECDP_synthase"/>
    <property type="match status" value="1"/>
</dbReference>
<dbReference type="FunFam" id="3.90.550.10:FF:000003">
    <property type="entry name" value="2-C-methyl-D-erythritol 4-phosphate cytidylyltransferase"/>
    <property type="match status" value="1"/>
</dbReference>
<dbReference type="Gene3D" id="3.30.1330.50">
    <property type="entry name" value="2-C-methyl-D-erythritol 2,4-cyclodiphosphate synthase"/>
    <property type="match status" value="1"/>
</dbReference>
<dbReference type="Gene3D" id="3.90.550.10">
    <property type="entry name" value="Spore Coat Polysaccharide Biosynthesis Protein SpsA, Chain A"/>
    <property type="match status" value="1"/>
</dbReference>
<dbReference type="HAMAP" id="MF_00108">
    <property type="entry name" value="IspD"/>
    <property type="match status" value="1"/>
</dbReference>
<dbReference type="HAMAP" id="MF_01520">
    <property type="entry name" value="IspDF"/>
    <property type="match status" value="1"/>
</dbReference>
<dbReference type="HAMAP" id="MF_00107">
    <property type="entry name" value="IspF"/>
    <property type="match status" value="1"/>
</dbReference>
<dbReference type="InterPro" id="IPR001228">
    <property type="entry name" value="IspD"/>
</dbReference>
<dbReference type="InterPro" id="IPR026596">
    <property type="entry name" value="IspD/F"/>
</dbReference>
<dbReference type="InterPro" id="IPR034683">
    <property type="entry name" value="IspD/TarI"/>
</dbReference>
<dbReference type="InterPro" id="IPR018294">
    <property type="entry name" value="ISPD_synthase_CS"/>
</dbReference>
<dbReference type="InterPro" id="IPR003526">
    <property type="entry name" value="MECDP_synthase"/>
</dbReference>
<dbReference type="InterPro" id="IPR020555">
    <property type="entry name" value="MECDP_synthase_CS"/>
</dbReference>
<dbReference type="InterPro" id="IPR036571">
    <property type="entry name" value="MECDP_synthase_sf"/>
</dbReference>
<dbReference type="InterPro" id="IPR029044">
    <property type="entry name" value="Nucleotide-diphossugar_trans"/>
</dbReference>
<dbReference type="NCBIfam" id="TIGR00453">
    <property type="entry name" value="ispD"/>
    <property type="match status" value="1"/>
</dbReference>
<dbReference type="NCBIfam" id="TIGR00151">
    <property type="entry name" value="ispF"/>
    <property type="match status" value="1"/>
</dbReference>
<dbReference type="NCBIfam" id="NF006899">
    <property type="entry name" value="PRK09382.1"/>
    <property type="match status" value="1"/>
</dbReference>
<dbReference type="PANTHER" id="PTHR43181">
    <property type="entry name" value="2-C-METHYL-D-ERYTHRITOL 2,4-CYCLODIPHOSPHATE SYNTHASE, CHLOROPLASTIC"/>
    <property type="match status" value="1"/>
</dbReference>
<dbReference type="PANTHER" id="PTHR43181:SF1">
    <property type="entry name" value="2-C-METHYL-D-ERYTHRITOL 2,4-CYCLODIPHOSPHATE SYNTHASE, CHLOROPLASTIC"/>
    <property type="match status" value="1"/>
</dbReference>
<dbReference type="Pfam" id="PF01128">
    <property type="entry name" value="IspD"/>
    <property type="match status" value="1"/>
</dbReference>
<dbReference type="Pfam" id="PF02542">
    <property type="entry name" value="YgbB"/>
    <property type="match status" value="1"/>
</dbReference>
<dbReference type="SUPFAM" id="SSF69765">
    <property type="entry name" value="IpsF-like"/>
    <property type="match status" value="1"/>
</dbReference>
<dbReference type="SUPFAM" id="SSF53448">
    <property type="entry name" value="Nucleotide-diphospho-sugar transferases"/>
    <property type="match status" value="1"/>
</dbReference>
<dbReference type="PROSITE" id="PS01295">
    <property type="entry name" value="ISPD"/>
    <property type="match status" value="1"/>
</dbReference>
<dbReference type="PROSITE" id="PS01350">
    <property type="entry name" value="ISPF"/>
    <property type="match status" value="1"/>
</dbReference>
<accession>Q3SSN8</accession>
<gene>
    <name evidence="1" type="primary">ispDF</name>
    <name type="ordered locus">Nwi_1442</name>
</gene>
<keyword id="KW-0414">Isoprene biosynthesis</keyword>
<keyword id="KW-0456">Lyase</keyword>
<keyword id="KW-0479">Metal-binding</keyword>
<keyword id="KW-0511">Multifunctional enzyme</keyword>
<keyword id="KW-0548">Nucleotidyltransferase</keyword>
<keyword id="KW-1185">Reference proteome</keyword>
<keyword id="KW-0808">Transferase</keyword>
<comment type="function">
    <text evidence="1">Bifunctional enzyme that catalyzes the formation of 4-diphosphocytidyl-2-C-methyl-D-erythritol from CTP and 2-C-methyl-D-erythritol 4-phosphate (MEP) (IspD), and catalyzes the conversion of 4-diphosphocytidyl-2-C-methyl-D-erythritol 2-phosphate (CDP-ME2P) to 2-C-methyl-D-erythritol 2,4-cyclodiphosphate (ME-CPP) with a corresponding release of cytidine 5-monophosphate (CMP) (IspF).</text>
</comment>
<comment type="catalytic activity">
    <reaction evidence="1">
        <text>2-C-methyl-D-erythritol 4-phosphate + CTP + H(+) = 4-CDP-2-C-methyl-D-erythritol + diphosphate</text>
        <dbReference type="Rhea" id="RHEA:13429"/>
        <dbReference type="ChEBI" id="CHEBI:15378"/>
        <dbReference type="ChEBI" id="CHEBI:33019"/>
        <dbReference type="ChEBI" id="CHEBI:37563"/>
        <dbReference type="ChEBI" id="CHEBI:57823"/>
        <dbReference type="ChEBI" id="CHEBI:58262"/>
        <dbReference type="EC" id="2.7.7.60"/>
    </reaction>
</comment>
<comment type="catalytic activity">
    <reaction evidence="1">
        <text>4-CDP-2-C-methyl-D-erythritol 2-phosphate = 2-C-methyl-D-erythritol 2,4-cyclic diphosphate + CMP</text>
        <dbReference type="Rhea" id="RHEA:23864"/>
        <dbReference type="ChEBI" id="CHEBI:57919"/>
        <dbReference type="ChEBI" id="CHEBI:58483"/>
        <dbReference type="ChEBI" id="CHEBI:60377"/>
        <dbReference type="EC" id="4.6.1.12"/>
    </reaction>
</comment>
<comment type="cofactor">
    <cofactor evidence="1">
        <name>a divalent metal cation</name>
        <dbReference type="ChEBI" id="CHEBI:60240"/>
    </cofactor>
</comment>
<comment type="pathway">
    <text evidence="1">Isoprenoid biosynthesis; isopentenyl diphosphate biosynthesis via DXP pathway; isopentenyl diphosphate from 1-deoxy-D-xylulose 5-phosphate: step 2/6.</text>
</comment>
<comment type="pathway">
    <text evidence="1">Isoprenoid biosynthesis; isopentenyl diphosphate biosynthesis via DXP pathway; isopentenyl diphosphate from 1-deoxy-D-xylulose 5-phosphate: step 4/6.</text>
</comment>
<comment type="similarity">
    <text evidence="1">In the N-terminal section; belongs to the IspD/TarI cytidylyltransferase family. IspD subfamily.</text>
</comment>
<comment type="similarity">
    <text evidence="1">In the C-terminal section; belongs to the IspF family.</text>
</comment>
<organism>
    <name type="scientific">Nitrobacter winogradskyi (strain ATCC 25391 / DSM 10237 / CIP 104748 / NCIMB 11846 / Nb-255)</name>
    <dbReference type="NCBI Taxonomy" id="323098"/>
    <lineage>
        <taxon>Bacteria</taxon>
        <taxon>Pseudomonadati</taxon>
        <taxon>Pseudomonadota</taxon>
        <taxon>Alphaproteobacteria</taxon>
        <taxon>Hyphomicrobiales</taxon>
        <taxon>Nitrobacteraceae</taxon>
        <taxon>Nitrobacter</taxon>
    </lineage>
</organism>